<name>LEPA_TREDE</name>
<dbReference type="EC" id="3.6.5.n1" evidence="1"/>
<dbReference type="EMBL" id="AE017226">
    <property type="protein sequence ID" value="AAS12407.1"/>
    <property type="molecule type" value="Genomic_DNA"/>
</dbReference>
<dbReference type="RefSeq" id="NP_972496.1">
    <property type="nucleotide sequence ID" value="NC_002967.9"/>
</dbReference>
<dbReference type="RefSeq" id="WP_010957093.1">
    <property type="nucleotide sequence ID" value="NC_002967.9"/>
</dbReference>
<dbReference type="SMR" id="P60794"/>
<dbReference type="STRING" id="243275.TDE_1893"/>
<dbReference type="PaxDb" id="243275-TDE_1893"/>
<dbReference type="GeneID" id="2739122"/>
<dbReference type="KEGG" id="tde:TDE_1893"/>
<dbReference type="PATRIC" id="fig|243275.7.peg.1792"/>
<dbReference type="eggNOG" id="COG0481">
    <property type="taxonomic scope" value="Bacteria"/>
</dbReference>
<dbReference type="HOGENOM" id="CLU_009995_3_3_12"/>
<dbReference type="OrthoDB" id="9804431at2"/>
<dbReference type="Proteomes" id="UP000008212">
    <property type="component" value="Chromosome"/>
</dbReference>
<dbReference type="GO" id="GO:0005886">
    <property type="term" value="C:plasma membrane"/>
    <property type="evidence" value="ECO:0007669"/>
    <property type="project" value="UniProtKB-SubCell"/>
</dbReference>
<dbReference type="GO" id="GO:0005525">
    <property type="term" value="F:GTP binding"/>
    <property type="evidence" value="ECO:0007669"/>
    <property type="project" value="UniProtKB-UniRule"/>
</dbReference>
<dbReference type="GO" id="GO:0003924">
    <property type="term" value="F:GTPase activity"/>
    <property type="evidence" value="ECO:0007669"/>
    <property type="project" value="UniProtKB-UniRule"/>
</dbReference>
<dbReference type="GO" id="GO:0043022">
    <property type="term" value="F:ribosome binding"/>
    <property type="evidence" value="ECO:0007669"/>
    <property type="project" value="UniProtKB-UniRule"/>
</dbReference>
<dbReference type="GO" id="GO:0003746">
    <property type="term" value="F:translation elongation factor activity"/>
    <property type="evidence" value="ECO:0007669"/>
    <property type="project" value="UniProtKB-UniRule"/>
</dbReference>
<dbReference type="GO" id="GO:0045727">
    <property type="term" value="P:positive regulation of translation"/>
    <property type="evidence" value="ECO:0007669"/>
    <property type="project" value="UniProtKB-UniRule"/>
</dbReference>
<dbReference type="CDD" id="cd03699">
    <property type="entry name" value="EF4_II"/>
    <property type="match status" value="1"/>
</dbReference>
<dbReference type="CDD" id="cd16260">
    <property type="entry name" value="EF4_III"/>
    <property type="match status" value="1"/>
</dbReference>
<dbReference type="CDD" id="cd01890">
    <property type="entry name" value="LepA"/>
    <property type="match status" value="1"/>
</dbReference>
<dbReference type="CDD" id="cd03709">
    <property type="entry name" value="lepA_C"/>
    <property type="match status" value="1"/>
</dbReference>
<dbReference type="FunFam" id="3.40.50.300:FF:000078">
    <property type="entry name" value="Elongation factor 4"/>
    <property type="match status" value="1"/>
</dbReference>
<dbReference type="FunFam" id="2.40.30.10:FF:000015">
    <property type="entry name" value="Translation factor GUF1, mitochondrial"/>
    <property type="match status" value="1"/>
</dbReference>
<dbReference type="FunFam" id="3.30.70.240:FF:000007">
    <property type="entry name" value="Translation factor GUF1, mitochondrial"/>
    <property type="match status" value="1"/>
</dbReference>
<dbReference type="FunFam" id="3.30.70.2570:FF:000001">
    <property type="entry name" value="Translation factor GUF1, mitochondrial"/>
    <property type="match status" value="1"/>
</dbReference>
<dbReference type="FunFam" id="3.30.70.870:FF:000004">
    <property type="entry name" value="Translation factor GUF1, mitochondrial"/>
    <property type="match status" value="1"/>
</dbReference>
<dbReference type="Gene3D" id="3.30.70.240">
    <property type="match status" value="1"/>
</dbReference>
<dbReference type="Gene3D" id="3.30.70.2570">
    <property type="entry name" value="Elongation factor 4, C-terminal domain"/>
    <property type="match status" value="1"/>
</dbReference>
<dbReference type="Gene3D" id="3.30.70.870">
    <property type="entry name" value="Elongation Factor G (Translational Gtpase), domain 3"/>
    <property type="match status" value="1"/>
</dbReference>
<dbReference type="Gene3D" id="3.40.50.300">
    <property type="entry name" value="P-loop containing nucleotide triphosphate hydrolases"/>
    <property type="match status" value="1"/>
</dbReference>
<dbReference type="Gene3D" id="2.40.30.10">
    <property type="entry name" value="Translation factors"/>
    <property type="match status" value="1"/>
</dbReference>
<dbReference type="HAMAP" id="MF_00071">
    <property type="entry name" value="LepA"/>
    <property type="match status" value="1"/>
</dbReference>
<dbReference type="InterPro" id="IPR006297">
    <property type="entry name" value="EF-4"/>
</dbReference>
<dbReference type="InterPro" id="IPR041095">
    <property type="entry name" value="EFG_II"/>
</dbReference>
<dbReference type="InterPro" id="IPR035647">
    <property type="entry name" value="EFG_III/V"/>
</dbReference>
<dbReference type="InterPro" id="IPR000640">
    <property type="entry name" value="EFG_V-like"/>
</dbReference>
<dbReference type="InterPro" id="IPR004161">
    <property type="entry name" value="EFTu-like_2"/>
</dbReference>
<dbReference type="InterPro" id="IPR038363">
    <property type="entry name" value="LepA_C_sf"/>
</dbReference>
<dbReference type="InterPro" id="IPR013842">
    <property type="entry name" value="LepA_CTD"/>
</dbReference>
<dbReference type="InterPro" id="IPR035654">
    <property type="entry name" value="LepA_IV"/>
</dbReference>
<dbReference type="InterPro" id="IPR027417">
    <property type="entry name" value="P-loop_NTPase"/>
</dbReference>
<dbReference type="InterPro" id="IPR005225">
    <property type="entry name" value="Small_GTP-bd"/>
</dbReference>
<dbReference type="InterPro" id="IPR000795">
    <property type="entry name" value="T_Tr_GTP-bd_dom"/>
</dbReference>
<dbReference type="InterPro" id="IPR009000">
    <property type="entry name" value="Transl_B-barrel_sf"/>
</dbReference>
<dbReference type="NCBIfam" id="TIGR01393">
    <property type="entry name" value="lepA"/>
    <property type="match status" value="1"/>
</dbReference>
<dbReference type="NCBIfam" id="TIGR00231">
    <property type="entry name" value="small_GTP"/>
    <property type="match status" value="1"/>
</dbReference>
<dbReference type="PANTHER" id="PTHR43512:SF4">
    <property type="entry name" value="TRANSLATION FACTOR GUF1 HOMOLOG, CHLOROPLASTIC"/>
    <property type="match status" value="1"/>
</dbReference>
<dbReference type="PANTHER" id="PTHR43512">
    <property type="entry name" value="TRANSLATION FACTOR GUF1-RELATED"/>
    <property type="match status" value="1"/>
</dbReference>
<dbReference type="Pfam" id="PF00679">
    <property type="entry name" value="EFG_C"/>
    <property type="match status" value="1"/>
</dbReference>
<dbReference type="Pfam" id="PF14492">
    <property type="entry name" value="EFG_III"/>
    <property type="match status" value="1"/>
</dbReference>
<dbReference type="Pfam" id="PF00009">
    <property type="entry name" value="GTP_EFTU"/>
    <property type="match status" value="1"/>
</dbReference>
<dbReference type="Pfam" id="PF03144">
    <property type="entry name" value="GTP_EFTU_D2"/>
    <property type="match status" value="1"/>
</dbReference>
<dbReference type="Pfam" id="PF06421">
    <property type="entry name" value="LepA_C"/>
    <property type="match status" value="1"/>
</dbReference>
<dbReference type="PRINTS" id="PR00315">
    <property type="entry name" value="ELONGATNFCT"/>
</dbReference>
<dbReference type="SUPFAM" id="SSF54980">
    <property type="entry name" value="EF-G C-terminal domain-like"/>
    <property type="match status" value="2"/>
</dbReference>
<dbReference type="SUPFAM" id="SSF52540">
    <property type="entry name" value="P-loop containing nucleoside triphosphate hydrolases"/>
    <property type="match status" value="1"/>
</dbReference>
<dbReference type="SUPFAM" id="SSF50447">
    <property type="entry name" value="Translation proteins"/>
    <property type="match status" value="1"/>
</dbReference>
<dbReference type="PROSITE" id="PS51722">
    <property type="entry name" value="G_TR_2"/>
    <property type="match status" value="1"/>
</dbReference>
<sequence length="601" mass="67231">MLNPENIRNFCIVAHIDHGKSTLSDRLIEKTKIIDERYHRNQMTDDMDIERERGITIKSHAVRIPYTAKDGKNYVLNFVDTPGHVDFSYEVSRAIASCEGAILIVDATQGVESQTLSNMYLALEHDLEILPVINKIDLPAADIDAAKHQIDHDLGLDSDAAVAVSAKTGENIDALFEAIITTFPPPKGSRDNPLQALIFDCHYDPYRGVVVHVRVFEGMIKPGMTIRFMNTGGEYKVEETGTFVLDLVKQDSLQAGEVGYIIAGIKTVSDVGVGDTITDAAAPCKAPLSGFKEVKPVVFSSVYPTDTNDYEELRESFEKLKLNDASLTWEKDSSLALGHGFRCGFLGLLHLEIVQERLEREFDQSVIFTAPSVRYKLTMRTGEEIICDNPADYPDEGLIASAEEPYIKATLITPTNYLGNVMSLCMEKRGVQTNMTYLDEKRVEMTYEMPLAEVLFDFYDRLKSISRGYASFDYEVIETRPTDLAKIDILINGKPVDALAQLAYKPSAYDKARLVCEKLKDEIPRQQFKIPIQGAIGSQIIARETISALRKDVLAKCYGGDITRKRKLLEKQKEGKKRMKMIGDVELPQSAFLAVLKTKED</sequence>
<gene>
    <name evidence="1" type="primary">lepA</name>
    <name type="ordered locus">TDE_1893</name>
</gene>
<organism>
    <name type="scientific">Treponema denticola (strain ATCC 35405 / DSM 14222 / CIP 103919 / JCM 8153 / KCTC 15104)</name>
    <dbReference type="NCBI Taxonomy" id="243275"/>
    <lineage>
        <taxon>Bacteria</taxon>
        <taxon>Pseudomonadati</taxon>
        <taxon>Spirochaetota</taxon>
        <taxon>Spirochaetia</taxon>
        <taxon>Spirochaetales</taxon>
        <taxon>Treponemataceae</taxon>
        <taxon>Treponema</taxon>
    </lineage>
</organism>
<accession>P60794</accession>
<protein>
    <recommendedName>
        <fullName evidence="1">Elongation factor 4</fullName>
        <shortName evidence="1">EF-4</shortName>
        <ecNumber evidence="1">3.6.5.n1</ecNumber>
    </recommendedName>
    <alternativeName>
        <fullName evidence="1">Ribosomal back-translocase LepA</fullName>
    </alternativeName>
</protein>
<proteinExistence type="inferred from homology"/>
<reference key="1">
    <citation type="journal article" date="2004" name="Proc. Natl. Acad. Sci. U.S.A.">
        <title>Comparison of the genome of the oral pathogen Treponema denticola with other spirochete genomes.</title>
        <authorList>
            <person name="Seshadri R."/>
            <person name="Myers G.S.A."/>
            <person name="Tettelin H."/>
            <person name="Eisen J.A."/>
            <person name="Heidelberg J.F."/>
            <person name="Dodson R.J."/>
            <person name="Davidsen T.M."/>
            <person name="DeBoy R.T."/>
            <person name="Fouts D.E."/>
            <person name="Haft D.H."/>
            <person name="Selengut J."/>
            <person name="Ren Q."/>
            <person name="Brinkac L.M."/>
            <person name="Madupu R."/>
            <person name="Kolonay J.F."/>
            <person name="Durkin S.A."/>
            <person name="Daugherty S.C."/>
            <person name="Shetty J."/>
            <person name="Shvartsbeyn A."/>
            <person name="Gebregeorgis E."/>
            <person name="Geer K."/>
            <person name="Tsegaye G."/>
            <person name="Malek J.A."/>
            <person name="Ayodeji B."/>
            <person name="Shatsman S."/>
            <person name="McLeod M.P."/>
            <person name="Smajs D."/>
            <person name="Howell J.K."/>
            <person name="Pal S."/>
            <person name="Amin A."/>
            <person name="Vashisth P."/>
            <person name="McNeill T.Z."/>
            <person name="Xiang Q."/>
            <person name="Sodergren E."/>
            <person name="Baca E."/>
            <person name="Weinstock G.M."/>
            <person name="Norris S.J."/>
            <person name="Fraser C.M."/>
            <person name="Paulsen I.T."/>
        </authorList>
    </citation>
    <scope>NUCLEOTIDE SEQUENCE [LARGE SCALE GENOMIC DNA]</scope>
    <source>
        <strain>ATCC 35405 / DSM 14222 / CIP 103919 / JCM 8153 / KCTC 15104</strain>
    </source>
</reference>
<evidence type="ECO:0000255" key="1">
    <source>
        <dbReference type="HAMAP-Rule" id="MF_00071"/>
    </source>
</evidence>
<comment type="function">
    <text evidence="1">Required for accurate and efficient protein synthesis under certain stress conditions. May act as a fidelity factor of the translation reaction, by catalyzing a one-codon backward translocation of tRNAs on improperly translocated ribosomes. Back-translocation proceeds from a post-translocation (POST) complex to a pre-translocation (PRE) complex, thus giving elongation factor G a second chance to translocate the tRNAs correctly. Binds to ribosomes in a GTP-dependent manner.</text>
</comment>
<comment type="catalytic activity">
    <reaction evidence="1">
        <text>GTP + H2O = GDP + phosphate + H(+)</text>
        <dbReference type="Rhea" id="RHEA:19669"/>
        <dbReference type="ChEBI" id="CHEBI:15377"/>
        <dbReference type="ChEBI" id="CHEBI:15378"/>
        <dbReference type="ChEBI" id="CHEBI:37565"/>
        <dbReference type="ChEBI" id="CHEBI:43474"/>
        <dbReference type="ChEBI" id="CHEBI:58189"/>
        <dbReference type="EC" id="3.6.5.n1"/>
    </reaction>
</comment>
<comment type="subcellular location">
    <subcellularLocation>
        <location evidence="1">Cell inner membrane</location>
        <topology evidence="1">Peripheral membrane protein</topology>
        <orientation evidence="1">Cytoplasmic side</orientation>
    </subcellularLocation>
</comment>
<comment type="similarity">
    <text evidence="1">Belongs to the TRAFAC class translation factor GTPase superfamily. Classic translation factor GTPase family. LepA subfamily.</text>
</comment>
<feature type="chain" id="PRO_0000176365" description="Elongation factor 4">
    <location>
        <begin position="1"/>
        <end position="601"/>
    </location>
</feature>
<feature type="domain" description="tr-type G">
    <location>
        <begin position="5"/>
        <end position="187"/>
    </location>
</feature>
<feature type="binding site" evidence="1">
    <location>
        <begin position="17"/>
        <end position="22"/>
    </location>
    <ligand>
        <name>GTP</name>
        <dbReference type="ChEBI" id="CHEBI:37565"/>
    </ligand>
</feature>
<feature type="binding site" evidence="1">
    <location>
        <begin position="134"/>
        <end position="137"/>
    </location>
    <ligand>
        <name>GTP</name>
        <dbReference type="ChEBI" id="CHEBI:37565"/>
    </ligand>
</feature>
<keyword id="KW-0997">Cell inner membrane</keyword>
<keyword id="KW-1003">Cell membrane</keyword>
<keyword id="KW-0342">GTP-binding</keyword>
<keyword id="KW-0378">Hydrolase</keyword>
<keyword id="KW-0472">Membrane</keyword>
<keyword id="KW-0547">Nucleotide-binding</keyword>
<keyword id="KW-0648">Protein biosynthesis</keyword>
<keyword id="KW-1185">Reference proteome</keyword>